<name>COX3_MYCTU</name>
<feature type="initiator methionine" description="Removed" evidence="3">
    <location>
        <position position="1"/>
    </location>
</feature>
<feature type="chain" id="PRO_0000183884" description="Probable cytochrome c oxidase subunit 3">
    <location>
        <begin position="2"/>
        <end position="203"/>
    </location>
</feature>
<feature type="transmembrane region" description="Helical" evidence="1">
    <location>
        <begin position="30"/>
        <end position="50"/>
    </location>
</feature>
<feature type="transmembrane region" description="Helical" evidence="1">
    <location>
        <begin position="71"/>
        <end position="91"/>
    </location>
</feature>
<feature type="transmembrane region" description="Helical" evidence="1">
    <location>
        <begin position="96"/>
        <end position="116"/>
    </location>
</feature>
<feature type="transmembrane region" description="Helical" evidence="1">
    <location>
        <begin position="143"/>
        <end position="163"/>
    </location>
</feature>
<feature type="transmembrane region" description="Helical" evidence="1">
    <location>
        <begin position="179"/>
        <end position="199"/>
    </location>
</feature>
<feature type="modified residue" description="N-acetylthreonine" evidence="3">
    <location>
        <position position="2"/>
    </location>
</feature>
<feature type="helix" evidence="4">
    <location>
        <begin position="24"/>
        <end position="48"/>
    </location>
</feature>
<feature type="turn" evidence="4">
    <location>
        <begin position="49"/>
        <end position="53"/>
    </location>
</feature>
<feature type="helix" evidence="4">
    <location>
        <begin position="67"/>
        <end position="91"/>
    </location>
</feature>
<feature type="helix" evidence="4">
    <location>
        <begin position="97"/>
        <end position="126"/>
    </location>
</feature>
<feature type="turn" evidence="4">
    <location>
        <begin position="131"/>
        <end position="133"/>
    </location>
</feature>
<feature type="helix" evidence="4">
    <location>
        <begin position="135"/>
        <end position="165"/>
    </location>
</feature>
<feature type="helix" evidence="4">
    <location>
        <begin position="172"/>
        <end position="199"/>
    </location>
</feature>
<feature type="turn" evidence="4">
    <location>
        <begin position="200"/>
        <end position="202"/>
    </location>
</feature>
<comment type="catalytic activity">
    <reaction>
        <text>4 Fe(II)-[cytochrome c] + O2 + 8 H(+)(in) = 4 Fe(III)-[cytochrome c] + 2 H2O + 4 H(+)(out)</text>
        <dbReference type="Rhea" id="RHEA:11436"/>
        <dbReference type="Rhea" id="RHEA-COMP:10350"/>
        <dbReference type="Rhea" id="RHEA-COMP:14399"/>
        <dbReference type="ChEBI" id="CHEBI:15377"/>
        <dbReference type="ChEBI" id="CHEBI:15378"/>
        <dbReference type="ChEBI" id="CHEBI:15379"/>
        <dbReference type="ChEBI" id="CHEBI:29033"/>
        <dbReference type="ChEBI" id="CHEBI:29034"/>
        <dbReference type="EC" id="7.1.1.9"/>
    </reaction>
</comment>
<comment type="subcellular location">
    <subcellularLocation>
        <location evidence="2">Cell membrane</location>
        <topology evidence="2">Multi-pass membrane protein</topology>
    </subcellularLocation>
</comment>
<comment type="similarity">
    <text evidence="2">Belongs to the cytochrome c oxidase subunit 3 family.</text>
</comment>
<accession>P9WP67</accession>
<accession>L0T941</accession>
<accession>P63856</accession>
<accession>Q10385</accession>
<evidence type="ECO:0000255" key="1"/>
<evidence type="ECO:0000305" key="2"/>
<evidence type="ECO:0007744" key="3">
    <source>
    </source>
</evidence>
<evidence type="ECO:0007829" key="4">
    <source>
        <dbReference type="PDB" id="8HCR"/>
    </source>
</evidence>
<protein>
    <recommendedName>
        <fullName>Probable cytochrome c oxidase subunit 3</fullName>
        <ecNumber>7.1.1.9</ecNumber>
    </recommendedName>
    <alternativeName>
        <fullName>Cytochrome aa3 subunit 3</fullName>
    </alternativeName>
    <alternativeName>
        <fullName>Cytochrome c oxidase polypeptide III</fullName>
    </alternativeName>
</protein>
<reference key="1">
    <citation type="journal article" date="1998" name="Nature">
        <title>Deciphering the biology of Mycobacterium tuberculosis from the complete genome sequence.</title>
        <authorList>
            <person name="Cole S.T."/>
            <person name="Brosch R."/>
            <person name="Parkhill J."/>
            <person name="Garnier T."/>
            <person name="Churcher C.M."/>
            <person name="Harris D.E."/>
            <person name="Gordon S.V."/>
            <person name="Eiglmeier K."/>
            <person name="Gas S."/>
            <person name="Barry C.E. III"/>
            <person name="Tekaia F."/>
            <person name="Badcock K."/>
            <person name="Basham D."/>
            <person name="Brown D."/>
            <person name="Chillingworth T."/>
            <person name="Connor R."/>
            <person name="Davies R.M."/>
            <person name="Devlin K."/>
            <person name="Feltwell T."/>
            <person name="Gentles S."/>
            <person name="Hamlin N."/>
            <person name="Holroyd S."/>
            <person name="Hornsby T."/>
            <person name="Jagels K."/>
            <person name="Krogh A."/>
            <person name="McLean J."/>
            <person name="Moule S."/>
            <person name="Murphy L.D."/>
            <person name="Oliver S."/>
            <person name="Osborne J."/>
            <person name="Quail M.A."/>
            <person name="Rajandream M.A."/>
            <person name="Rogers J."/>
            <person name="Rutter S."/>
            <person name="Seeger K."/>
            <person name="Skelton S."/>
            <person name="Squares S."/>
            <person name="Squares R."/>
            <person name="Sulston J.E."/>
            <person name="Taylor K."/>
            <person name="Whitehead S."/>
            <person name="Barrell B.G."/>
        </authorList>
    </citation>
    <scope>NUCLEOTIDE SEQUENCE [LARGE SCALE GENOMIC DNA]</scope>
    <source>
        <strain>ATCC 25618 / H37Rv</strain>
    </source>
</reference>
<reference key="2">
    <citation type="journal article" date="2011" name="Mol. Cell. Proteomics">
        <title>Proteogenomic analysis of Mycobacterium tuberculosis by high resolution mass spectrometry.</title>
        <authorList>
            <person name="Kelkar D.S."/>
            <person name="Kumar D."/>
            <person name="Kumar P."/>
            <person name="Balakrishnan L."/>
            <person name="Muthusamy B."/>
            <person name="Yadav A.K."/>
            <person name="Shrivastava P."/>
            <person name="Marimuthu A."/>
            <person name="Anand S."/>
            <person name="Sundaram H."/>
            <person name="Kingsbury R."/>
            <person name="Harsha H.C."/>
            <person name="Nair B."/>
            <person name="Prasad T.S."/>
            <person name="Chauhan D.S."/>
            <person name="Katoch K."/>
            <person name="Katoch V.M."/>
            <person name="Kumar P."/>
            <person name="Chaerkady R."/>
            <person name="Ramachandran S."/>
            <person name="Dash D."/>
            <person name="Pandey A."/>
        </authorList>
    </citation>
    <scope>ACETYLATION [LARGE SCALE ANALYSIS] AT THR-2</scope>
    <scope>CLEAVAGE OF INITIATOR METHIONINE [LARGE SCALE ANALYSIS]</scope>
    <scope>IDENTIFICATION BY MASS SPECTROMETRY [LARGE SCALE ANALYSIS]</scope>
    <source>
        <strain>ATCC 25618 / H37Rv</strain>
    </source>
</reference>
<dbReference type="EC" id="7.1.1.9"/>
<dbReference type="EMBL" id="AL123456">
    <property type="protein sequence ID" value="CCP44970.1"/>
    <property type="molecule type" value="Genomic_DNA"/>
</dbReference>
<dbReference type="PIR" id="B70784">
    <property type="entry name" value="B70784"/>
</dbReference>
<dbReference type="RefSeq" id="NP_216709.1">
    <property type="nucleotide sequence ID" value="NC_000962.3"/>
</dbReference>
<dbReference type="RefSeq" id="WP_003411389.1">
    <property type="nucleotide sequence ID" value="NZ_NVQJ01000008.1"/>
</dbReference>
<dbReference type="PDB" id="8HCR">
    <property type="method" value="EM"/>
    <property type="chains" value="G/S=1-203"/>
</dbReference>
<dbReference type="PDBsum" id="8HCR"/>
<dbReference type="EMDB" id="EMD-34664"/>
<dbReference type="SMR" id="P9WP67"/>
<dbReference type="FunCoup" id="P9WP67">
    <property type="interactions" value="85"/>
</dbReference>
<dbReference type="STRING" id="83332.Rv2193"/>
<dbReference type="iPTMnet" id="P9WP67"/>
<dbReference type="PaxDb" id="83332-Rv2193"/>
<dbReference type="DNASU" id="887425"/>
<dbReference type="GeneID" id="887425"/>
<dbReference type="KEGG" id="mtu:Rv2193"/>
<dbReference type="KEGG" id="mtv:RVBD_2193"/>
<dbReference type="TubercuList" id="Rv2193"/>
<dbReference type="eggNOG" id="COG1845">
    <property type="taxonomic scope" value="Bacteria"/>
</dbReference>
<dbReference type="InParanoid" id="P9WP67"/>
<dbReference type="OrthoDB" id="9810850at2"/>
<dbReference type="PhylomeDB" id="P9WP67"/>
<dbReference type="Proteomes" id="UP000001584">
    <property type="component" value="Chromosome"/>
</dbReference>
<dbReference type="GO" id="GO:0005886">
    <property type="term" value="C:plasma membrane"/>
    <property type="evidence" value="ECO:0007669"/>
    <property type="project" value="UniProtKB-SubCell"/>
</dbReference>
<dbReference type="GO" id="GO:0004129">
    <property type="term" value="F:cytochrome-c oxidase activity"/>
    <property type="evidence" value="ECO:0007669"/>
    <property type="project" value="UniProtKB-EC"/>
</dbReference>
<dbReference type="GO" id="GO:0019646">
    <property type="term" value="P:aerobic electron transport chain"/>
    <property type="evidence" value="ECO:0007669"/>
    <property type="project" value="InterPro"/>
</dbReference>
<dbReference type="GO" id="GO:0009060">
    <property type="term" value="P:aerobic respiration"/>
    <property type="evidence" value="ECO:0000318"/>
    <property type="project" value="GO_Central"/>
</dbReference>
<dbReference type="CDD" id="cd00386">
    <property type="entry name" value="Heme_Cu_Oxidase_III_like"/>
    <property type="match status" value="1"/>
</dbReference>
<dbReference type="FunFam" id="1.20.120.80:FF:000001">
    <property type="entry name" value="Cytochrome (Ubi)quinol oxidase subunit III"/>
    <property type="match status" value="1"/>
</dbReference>
<dbReference type="Gene3D" id="1.20.120.80">
    <property type="entry name" value="Cytochrome c oxidase, subunit III, four-helix bundle"/>
    <property type="match status" value="1"/>
</dbReference>
<dbReference type="InterPro" id="IPR024791">
    <property type="entry name" value="Cyt_c/ubiquinol_Oxase_su3"/>
</dbReference>
<dbReference type="InterPro" id="IPR000298">
    <property type="entry name" value="Cyt_c_oxidase-like_su3"/>
</dbReference>
<dbReference type="InterPro" id="IPR035973">
    <property type="entry name" value="Cyt_c_oxidase_su3-like_sf"/>
</dbReference>
<dbReference type="InterPro" id="IPR013833">
    <property type="entry name" value="Cyt_c_oxidase_su3_a-hlx"/>
</dbReference>
<dbReference type="PANTHER" id="PTHR11403:SF2">
    <property type="entry name" value="CYTOCHROME BO(3) UBIQUINOL OXIDASE SUBUNIT 3"/>
    <property type="match status" value="1"/>
</dbReference>
<dbReference type="PANTHER" id="PTHR11403">
    <property type="entry name" value="CYTOCHROME C OXIDASE SUBUNIT III"/>
    <property type="match status" value="1"/>
</dbReference>
<dbReference type="Pfam" id="PF00510">
    <property type="entry name" value="COX3"/>
    <property type="match status" value="1"/>
</dbReference>
<dbReference type="SUPFAM" id="SSF81452">
    <property type="entry name" value="Cytochrome c oxidase subunit III-like"/>
    <property type="match status" value="1"/>
</dbReference>
<dbReference type="PROSITE" id="PS50253">
    <property type="entry name" value="COX3"/>
    <property type="match status" value="1"/>
</dbReference>
<gene>
    <name type="primary">ctaE</name>
    <name type="ordered locus">Rv2193</name>
    <name type="ORF">MTCY190.04</name>
</gene>
<keyword id="KW-0002">3D-structure</keyword>
<keyword id="KW-0007">Acetylation</keyword>
<keyword id="KW-1003">Cell membrane</keyword>
<keyword id="KW-0472">Membrane</keyword>
<keyword id="KW-1185">Reference proteome</keyword>
<keyword id="KW-1278">Translocase</keyword>
<keyword id="KW-0812">Transmembrane</keyword>
<keyword id="KW-1133">Transmembrane helix</keyword>
<organism>
    <name type="scientific">Mycobacterium tuberculosis (strain ATCC 25618 / H37Rv)</name>
    <dbReference type="NCBI Taxonomy" id="83332"/>
    <lineage>
        <taxon>Bacteria</taxon>
        <taxon>Bacillati</taxon>
        <taxon>Actinomycetota</taxon>
        <taxon>Actinomycetes</taxon>
        <taxon>Mycobacteriales</taxon>
        <taxon>Mycobacteriaceae</taxon>
        <taxon>Mycobacterium</taxon>
        <taxon>Mycobacterium tuberculosis complex</taxon>
    </lineage>
</organism>
<proteinExistence type="evidence at protein level"/>
<sequence>MTSAVGTSGTAITSRVHSLNRPNMVSVGTIVWLSSELMFFAGLFAFYFSARAQAGGNWPPPPTELNLYQAVPVTLVLIASSFTCQMGVFAAERGDIFGLRRWYVITFLMGLFFVLGQAYEYRNLMSHGTSIPSSAYGSVFYLATGFHGLHVTGGLIAFIFLLVRTGMSKFTPAQATASIVVSYYWHFVDIVWIALFTVIYFIR</sequence>